<feature type="chain" id="PRO_0000218574" description="CCR4-NOT transcription complex subunit 6">
    <location>
        <begin position="1"/>
        <end position="557"/>
    </location>
</feature>
<feature type="repeat" description="LRR 1">
    <location>
        <begin position="52"/>
        <end position="73"/>
    </location>
</feature>
<feature type="repeat" description="LRR 2">
    <location>
        <begin position="75"/>
        <end position="96"/>
    </location>
</feature>
<feature type="repeat" description="LRR 3">
    <location>
        <begin position="98"/>
        <end position="120"/>
    </location>
</feature>
<feature type="repeat" description="LRR 4">
    <location>
        <begin position="121"/>
        <end position="143"/>
    </location>
</feature>
<feature type="region of interest" description="Nuclease domain" evidence="1">
    <location>
        <begin position="153"/>
        <end position="557"/>
    </location>
</feature>
<feature type="active site" description="Proton donor/acceptor" evidence="2">
    <location>
        <position position="412"/>
    </location>
</feature>
<feature type="binding site" evidence="2">
    <location>
        <position position="240"/>
    </location>
    <ligand>
        <name>Mg(2+)</name>
        <dbReference type="ChEBI" id="CHEBI:18420"/>
        <label>1</label>
    </ligand>
</feature>
<feature type="binding site" evidence="2">
    <location>
        <position position="240"/>
    </location>
    <ligand>
        <name>substrate</name>
    </ligand>
</feature>
<feature type="binding site" evidence="2">
    <location>
        <position position="276"/>
    </location>
    <ligand>
        <name>substrate</name>
    </ligand>
</feature>
<feature type="binding site" evidence="2">
    <location>
        <position position="361"/>
    </location>
    <ligand>
        <name>substrate</name>
    </ligand>
</feature>
<feature type="binding site" evidence="2">
    <location>
        <position position="366"/>
    </location>
    <ligand>
        <name>substrate</name>
    </ligand>
</feature>
<feature type="binding site" evidence="2">
    <location>
        <position position="412"/>
    </location>
    <ligand>
        <name>Mg(2+)</name>
        <dbReference type="ChEBI" id="CHEBI:18420"/>
        <label>2</label>
    </ligand>
</feature>
<feature type="binding site" evidence="2">
    <location>
        <position position="414"/>
    </location>
    <ligand>
        <name>substrate</name>
    </ligand>
</feature>
<feature type="binding site" evidence="2">
    <location>
        <position position="481"/>
    </location>
    <ligand>
        <name>substrate</name>
    </ligand>
</feature>
<feature type="binding site" evidence="2">
    <location>
        <position position="486"/>
    </location>
    <ligand>
        <name>substrate</name>
    </ligand>
</feature>
<feature type="splice variant" id="VSP_009938" description="In isoform 3." evidence="6">
    <location>
        <begin position="1"/>
        <end position="191"/>
    </location>
</feature>
<feature type="splice variant" id="VSP_009939" description="In isoform 2." evidence="7">
    <original>GTAKRI</original>
    <variation>V</variation>
    <location>
        <begin position="159"/>
        <end position="164"/>
    </location>
</feature>
<feature type="sequence conflict" description="In Ref. 1; AAK85707." evidence="8" ref="1">
    <original>C</original>
    <variation>G</variation>
    <location>
        <position position="198"/>
    </location>
</feature>
<organism>
    <name type="scientific">Mus musculus</name>
    <name type="common">Mouse</name>
    <dbReference type="NCBI Taxonomy" id="10090"/>
    <lineage>
        <taxon>Eukaryota</taxon>
        <taxon>Metazoa</taxon>
        <taxon>Chordata</taxon>
        <taxon>Craniata</taxon>
        <taxon>Vertebrata</taxon>
        <taxon>Euteleostomi</taxon>
        <taxon>Mammalia</taxon>
        <taxon>Eutheria</taxon>
        <taxon>Euarchontoglires</taxon>
        <taxon>Glires</taxon>
        <taxon>Rodentia</taxon>
        <taxon>Myomorpha</taxon>
        <taxon>Muroidea</taxon>
        <taxon>Muridae</taxon>
        <taxon>Murinae</taxon>
        <taxon>Mus</taxon>
        <taxon>Mus</taxon>
    </lineage>
</organism>
<reference key="1">
    <citation type="journal article" date="2001" name="BMC Genomics">
        <title>Identification of four families of yCCR4- and Mg2+-dependent endonuclease-related proteins in higher eukaryotes, and characterization of orthologs of yCCR4 with a conserved leucine-rich repeat essential for hCAF1/hPOP2 binding.</title>
        <authorList>
            <person name="Dupressoir A."/>
            <person name="Morel A.-P."/>
            <person name="Barbot W."/>
            <person name="Loireau M.-P."/>
            <person name="Corbo L."/>
            <person name="Heidmann T."/>
        </authorList>
    </citation>
    <scope>NUCLEOTIDE SEQUENCE [MRNA] (ISOFORM 1)</scope>
    <source>
        <strain>CBA/J</strain>
    </source>
</reference>
<reference key="2">
    <citation type="journal article" date="2003" name="DNA Res.">
        <title>Prediction of the coding sequences of mouse homologues of KIAA gene: III. The complete nucleotide sequences of 500 mouse KIAA-homologous cDNAs identified by screening of terminal sequences of cDNA clones randomly sampled from size-fractionated libraries.</title>
        <authorList>
            <person name="Okazaki N."/>
            <person name="Kikuno R."/>
            <person name="Ohara R."/>
            <person name="Inamoto S."/>
            <person name="Koseki H."/>
            <person name="Hiraoka S."/>
            <person name="Saga Y."/>
            <person name="Nagase T."/>
            <person name="Ohara O."/>
            <person name="Koga H."/>
        </authorList>
    </citation>
    <scope>NUCLEOTIDE SEQUENCE [LARGE SCALE MRNA] (ISOFORM 3)</scope>
    <source>
        <tissue>Brain</tissue>
    </source>
</reference>
<reference key="3">
    <citation type="journal article" date="2009" name="PLoS Biol.">
        <title>Lineage-specific biology revealed by a finished genome assembly of the mouse.</title>
        <authorList>
            <person name="Church D.M."/>
            <person name="Goodstadt L."/>
            <person name="Hillier L.W."/>
            <person name="Zody M.C."/>
            <person name="Goldstein S."/>
            <person name="She X."/>
            <person name="Bult C.J."/>
            <person name="Agarwala R."/>
            <person name="Cherry J.L."/>
            <person name="DiCuccio M."/>
            <person name="Hlavina W."/>
            <person name="Kapustin Y."/>
            <person name="Meric P."/>
            <person name="Maglott D."/>
            <person name="Birtle Z."/>
            <person name="Marques A.C."/>
            <person name="Graves T."/>
            <person name="Zhou S."/>
            <person name="Teague B."/>
            <person name="Potamousis K."/>
            <person name="Churas C."/>
            <person name="Place M."/>
            <person name="Herschleb J."/>
            <person name="Runnheim R."/>
            <person name="Forrest D."/>
            <person name="Amos-Landgraf J."/>
            <person name="Schwartz D.C."/>
            <person name="Cheng Z."/>
            <person name="Lindblad-Toh K."/>
            <person name="Eichler E.E."/>
            <person name="Ponting C.P."/>
        </authorList>
    </citation>
    <scope>NUCLEOTIDE SEQUENCE [LARGE SCALE GENOMIC DNA]</scope>
    <source>
        <strain>C57BL/6J</strain>
    </source>
</reference>
<reference key="4">
    <citation type="journal article" date="2004" name="Genome Res.">
        <title>The status, quality, and expansion of the NIH full-length cDNA project: the Mammalian Gene Collection (MGC).</title>
        <authorList>
            <consortium name="The MGC Project Team"/>
        </authorList>
    </citation>
    <scope>NUCLEOTIDE SEQUENCE [LARGE SCALE MRNA] (ISOFORMS 1 AND 2)</scope>
    <source>
        <strain>C57BL/6J</strain>
        <tissue>Brain</tissue>
        <tissue>Mammary tumor</tissue>
    </source>
</reference>
<reference key="5">
    <citation type="journal article" date="2004" name="Genes Dev.">
        <title>UNR, a new partner of poly(A)-binding protein, plays a key role in translationally coupled mRNA turnover mediated by the c-fos major coding-region determinant.</title>
        <authorList>
            <person name="Chang T.-C."/>
            <person name="Yamashita A."/>
            <person name="Chen C.-Y.A."/>
            <person name="Yamashita Y."/>
            <person name="Zhu W."/>
            <person name="Durdan S."/>
            <person name="Kahvejian A."/>
            <person name="Sonenberg N."/>
            <person name="Shyu A.-B."/>
        </authorList>
    </citation>
    <scope>INTERACTION WITH UNR</scope>
</reference>
<reference key="6">
    <citation type="journal article" date="2012" name="Stem Cells">
        <title>Cnot1, Cnot2, and Cnot3 maintain mouse and human ESC identity and inhibit extraembryonic differentiation.</title>
        <authorList>
            <person name="Zheng X."/>
            <person name="Dumitru R."/>
            <person name="Lackford B.L."/>
            <person name="Freudenberg J.M."/>
            <person name="Singh A.P."/>
            <person name="Archer T.K."/>
            <person name="Jothi R."/>
            <person name="Hu G."/>
        </authorList>
    </citation>
    <scope>DEVELOPMENTAL STAGE</scope>
</reference>
<proteinExistence type="evidence at protein level"/>
<evidence type="ECO:0000250" key="1"/>
<evidence type="ECO:0000250" key="2">
    <source>
        <dbReference type="UniProtKB" id="Q96LI5"/>
    </source>
</evidence>
<evidence type="ECO:0000250" key="3">
    <source>
        <dbReference type="UniProtKB" id="Q9ULM6"/>
    </source>
</evidence>
<evidence type="ECO:0000269" key="4">
    <source>
    </source>
</evidence>
<evidence type="ECO:0000269" key="5">
    <source>
    </source>
</evidence>
<evidence type="ECO:0000303" key="6">
    <source>
    </source>
</evidence>
<evidence type="ECO:0000303" key="7">
    <source>
    </source>
</evidence>
<evidence type="ECO:0000305" key="8"/>
<dbReference type="EC" id="3.1.13.4" evidence="3"/>
<dbReference type="EMBL" id="AY043269">
    <property type="protein sequence ID" value="AAK85707.1"/>
    <property type="molecule type" value="mRNA"/>
</dbReference>
<dbReference type="EMBL" id="AK129307">
    <property type="protein sequence ID" value="BAC98117.1"/>
    <property type="status" value="ALT_INIT"/>
    <property type="molecule type" value="mRNA"/>
</dbReference>
<dbReference type="EMBL" id="AL606479">
    <property type="status" value="NOT_ANNOTATED_CDS"/>
    <property type="molecule type" value="Genomic_DNA"/>
</dbReference>
<dbReference type="EMBL" id="BC049984">
    <property type="protein sequence ID" value="AAH49984.1"/>
    <property type="molecule type" value="mRNA"/>
</dbReference>
<dbReference type="EMBL" id="BC057190">
    <property type="protein sequence ID" value="AAH57190.1"/>
    <property type="molecule type" value="mRNA"/>
</dbReference>
<dbReference type="EMBL" id="BC062950">
    <property type="protein sequence ID" value="AAH62950.1"/>
    <property type="molecule type" value="mRNA"/>
</dbReference>
<dbReference type="CCDS" id="CCDS24621.1">
    <molecule id="Q8K3P5-2"/>
</dbReference>
<dbReference type="CCDS" id="CCDS70172.1">
    <molecule id="Q8K3P5-1"/>
</dbReference>
<dbReference type="RefSeq" id="NP_001277670.1">
    <molecule id="Q8K3P5-1"/>
    <property type="nucleotide sequence ID" value="NM_001290741.2"/>
</dbReference>
<dbReference type="RefSeq" id="NP_997649.1">
    <molecule id="Q8K3P5-2"/>
    <property type="nucleotide sequence ID" value="NM_212484.2"/>
</dbReference>
<dbReference type="RefSeq" id="XP_006532003.1">
    <property type="nucleotide sequence ID" value="XM_006531940.2"/>
</dbReference>
<dbReference type="RefSeq" id="XP_006532004.1">
    <molecule id="Q8K3P5-1"/>
    <property type="nucleotide sequence ID" value="XM_006531941.5"/>
</dbReference>
<dbReference type="RefSeq" id="XP_006532005.1">
    <molecule id="Q8K3P5-1"/>
    <property type="nucleotide sequence ID" value="XM_006531942.3"/>
</dbReference>
<dbReference type="RefSeq" id="XP_011246967.1">
    <property type="nucleotide sequence ID" value="XM_011248665.2"/>
</dbReference>
<dbReference type="RefSeq" id="XP_036012101.1">
    <molecule id="Q8K3P5-1"/>
    <property type="nucleotide sequence ID" value="XM_036156208.1"/>
</dbReference>
<dbReference type="RefSeq" id="XP_036012102.1">
    <molecule id="Q8K3P5-2"/>
    <property type="nucleotide sequence ID" value="XM_036156209.1"/>
</dbReference>
<dbReference type="SMR" id="Q8K3P5"/>
<dbReference type="FunCoup" id="Q8K3P5">
    <property type="interactions" value="3726"/>
</dbReference>
<dbReference type="IntAct" id="Q8K3P5">
    <property type="interactions" value="1"/>
</dbReference>
<dbReference type="STRING" id="10090.ENSMUSP00000121239"/>
<dbReference type="iPTMnet" id="Q8K3P5"/>
<dbReference type="PhosphoSitePlus" id="Q8K3P5"/>
<dbReference type="jPOST" id="Q8K3P5"/>
<dbReference type="PaxDb" id="10090-ENSMUSP00000121239"/>
<dbReference type="PeptideAtlas" id="Q8K3P5"/>
<dbReference type="ProteomicsDB" id="279122">
    <molecule id="Q8K3P5-1"/>
</dbReference>
<dbReference type="ProteomicsDB" id="279123">
    <molecule id="Q8K3P5-2"/>
</dbReference>
<dbReference type="ProteomicsDB" id="279124">
    <molecule id="Q8K3P5-3"/>
</dbReference>
<dbReference type="Pumba" id="Q8K3P5"/>
<dbReference type="Antibodypedia" id="29603">
    <property type="antibodies" value="146 antibodies from 22 providers"/>
</dbReference>
<dbReference type="DNASU" id="104625"/>
<dbReference type="Ensembl" id="ENSMUST00000020624.7">
    <molecule id="Q8K3P5-2"/>
    <property type="protein sequence ID" value="ENSMUSP00000020624.7"/>
    <property type="gene ID" value="ENSMUSG00000020362.14"/>
</dbReference>
<dbReference type="Ensembl" id="ENSMUST00000145353.8">
    <molecule id="Q8K3P5-1"/>
    <property type="protein sequence ID" value="ENSMUSP00000121239.2"/>
    <property type="gene ID" value="ENSMUSG00000020362.14"/>
</dbReference>
<dbReference type="GeneID" id="104625"/>
<dbReference type="KEGG" id="mmu:104625"/>
<dbReference type="UCSC" id="uc007iqx.2">
    <molecule id="Q8K3P5-1"/>
    <property type="organism name" value="mouse"/>
</dbReference>
<dbReference type="UCSC" id="uc007irb.3">
    <molecule id="Q8K3P5-2"/>
    <property type="organism name" value="mouse"/>
</dbReference>
<dbReference type="AGR" id="MGI:2144529"/>
<dbReference type="CTD" id="57472"/>
<dbReference type="MGI" id="MGI:2144529">
    <property type="gene designation" value="Cnot6"/>
</dbReference>
<dbReference type="VEuPathDB" id="HostDB:ENSMUSG00000020362"/>
<dbReference type="eggNOG" id="KOG0620">
    <property type="taxonomic scope" value="Eukaryota"/>
</dbReference>
<dbReference type="GeneTree" id="ENSGT00940000158978"/>
<dbReference type="HOGENOM" id="CLU_016428_4_2_1"/>
<dbReference type="InParanoid" id="Q8K3P5"/>
<dbReference type="OMA" id="EHRMVAP"/>
<dbReference type="OrthoDB" id="428734at2759"/>
<dbReference type="PhylomeDB" id="Q8K3P5"/>
<dbReference type="TreeFam" id="TF323175"/>
<dbReference type="Reactome" id="R-MMU-429947">
    <property type="pathway name" value="Deadenylation of mRNA"/>
</dbReference>
<dbReference type="Reactome" id="R-MMU-6804115">
    <property type="pathway name" value="TP53 regulates transcription of additional cell cycle genes whose exact role in the p53 pathway remain uncertain"/>
</dbReference>
<dbReference type="BioGRID-ORCS" id="104625">
    <property type="hits" value="6 hits in 80 CRISPR screens"/>
</dbReference>
<dbReference type="ChiTaRS" id="Cnot6">
    <property type="organism name" value="mouse"/>
</dbReference>
<dbReference type="PRO" id="PR:Q8K3P5"/>
<dbReference type="Proteomes" id="UP000000589">
    <property type="component" value="Chromosome 11"/>
</dbReference>
<dbReference type="RNAct" id="Q8K3P5">
    <property type="molecule type" value="protein"/>
</dbReference>
<dbReference type="Bgee" id="ENSMUSG00000020362">
    <property type="expression patterns" value="Expressed in dorsal pancreas and 270 other cell types or tissues"/>
</dbReference>
<dbReference type="GO" id="GO:0030014">
    <property type="term" value="C:CCR4-NOT complex"/>
    <property type="evidence" value="ECO:0000250"/>
    <property type="project" value="UniProtKB"/>
</dbReference>
<dbReference type="GO" id="GO:0005829">
    <property type="term" value="C:cytosol"/>
    <property type="evidence" value="ECO:0000304"/>
    <property type="project" value="Reactome"/>
</dbReference>
<dbReference type="GO" id="GO:0005634">
    <property type="term" value="C:nucleus"/>
    <property type="evidence" value="ECO:0007669"/>
    <property type="project" value="UniProtKB-SubCell"/>
</dbReference>
<dbReference type="GO" id="GO:0046872">
    <property type="term" value="F:metal ion binding"/>
    <property type="evidence" value="ECO:0007669"/>
    <property type="project" value="UniProtKB-KW"/>
</dbReference>
<dbReference type="GO" id="GO:0004535">
    <property type="term" value="F:poly(A)-specific ribonuclease activity"/>
    <property type="evidence" value="ECO:0000250"/>
    <property type="project" value="UniProtKB"/>
</dbReference>
<dbReference type="GO" id="GO:0003723">
    <property type="term" value="F:RNA binding"/>
    <property type="evidence" value="ECO:0007669"/>
    <property type="project" value="UniProtKB-KW"/>
</dbReference>
<dbReference type="GO" id="GO:0004532">
    <property type="term" value="F:RNA exonuclease activity"/>
    <property type="evidence" value="ECO:0000250"/>
    <property type="project" value="UniProtKB"/>
</dbReference>
<dbReference type="GO" id="GO:0003713">
    <property type="term" value="F:transcription coactivator activity"/>
    <property type="evidence" value="ECO:0000250"/>
    <property type="project" value="UniProtKB"/>
</dbReference>
<dbReference type="GO" id="GO:0035279">
    <property type="term" value="P:miRNA-mediated gene silencing by mRNA destabilization"/>
    <property type="evidence" value="ECO:0000250"/>
    <property type="project" value="UniProtKB"/>
</dbReference>
<dbReference type="GO" id="GO:0070966">
    <property type="term" value="P:nuclear-transcribed mRNA catabolic process, no-go decay"/>
    <property type="evidence" value="ECO:0000250"/>
    <property type="project" value="UniProtKB"/>
</dbReference>
<dbReference type="GO" id="GO:0000289">
    <property type="term" value="P:nuclear-transcribed mRNA poly(A) tail shortening"/>
    <property type="evidence" value="ECO:0000250"/>
    <property type="project" value="UniProtKB"/>
</dbReference>
<dbReference type="GO" id="GO:0008284">
    <property type="term" value="P:positive regulation of cell population proliferation"/>
    <property type="evidence" value="ECO:0007669"/>
    <property type="project" value="Ensembl"/>
</dbReference>
<dbReference type="GO" id="GO:0010606">
    <property type="term" value="P:positive regulation of cytoplasmic mRNA processing body assembly"/>
    <property type="evidence" value="ECO:0007669"/>
    <property type="project" value="Ensembl"/>
</dbReference>
<dbReference type="GO" id="GO:0006417">
    <property type="term" value="P:regulation of translation"/>
    <property type="evidence" value="ECO:0007669"/>
    <property type="project" value="UniProtKB-KW"/>
</dbReference>
<dbReference type="CDD" id="cd10313">
    <property type="entry name" value="Deadenylase_CCR4a"/>
    <property type="match status" value="1"/>
</dbReference>
<dbReference type="FunFam" id="3.60.10.10:FF:000002">
    <property type="entry name" value="CCR4-NOT transcription complex subunit 6 like"/>
    <property type="match status" value="1"/>
</dbReference>
<dbReference type="FunFam" id="3.80.10.10:FF:000008">
    <property type="entry name" value="CCR4-NOT transcription complex subunit 6 like"/>
    <property type="match status" value="1"/>
</dbReference>
<dbReference type="Gene3D" id="3.60.10.10">
    <property type="entry name" value="Endonuclease/exonuclease/phosphatase"/>
    <property type="match status" value="1"/>
</dbReference>
<dbReference type="Gene3D" id="3.80.10.10">
    <property type="entry name" value="Ribonuclease Inhibitor"/>
    <property type="match status" value="1"/>
</dbReference>
<dbReference type="InterPro" id="IPR050410">
    <property type="entry name" value="CCR4/nocturin_mRNA_transcr"/>
</dbReference>
<dbReference type="InterPro" id="IPR034966">
    <property type="entry name" value="Cnot6"/>
</dbReference>
<dbReference type="InterPro" id="IPR036691">
    <property type="entry name" value="Endo/exonu/phosph_ase_sf"/>
</dbReference>
<dbReference type="InterPro" id="IPR005135">
    <property type="entry name" value="Endo/exonuclease/phosphatase"/>
</dbReference>
<dbReference type="InterPro" id="IPR001611">
    <property type="entry name" value="Leu-rich_rpt"/>
</dbReference>
<dbReference type="InterPro" id="IPR003591">
    <property type="entry name" value="Leu-rich_rpt_typical-subtyp"/>
</dbReference>
<dbReference type="InterPro" id="IPR032675">
    <property type="entry name" value="LRR_dom_sf"/>
</dbReference>
<dbReference type="PANTHER" id="PTHR12121">
    <property type="entry name" value="CARBON CATABOLITE REPRESSOR PROTEIN 4"/>
    <property type="match status" value="1"/>
</dbReference>
<dbReference type="PANTHER" id="PTHR12121:SF33">
    <property type="entry name" value="CCR4-NOT TRANSCRIPTION COMPLEX SUBUNIT 6"/>
    <property type="match status" value="1"/>
</dbReference>
<dbReference type="Pfam" id="PF03372">
    <property type="entry name" value="Exo_endo_phos"/>
    <property type="match status" value="1"/>
</dbReference>
<dbReference type="Pfam" id="PF13855">
    <property type="entry name" value="LRR_8"/>
    <property type="match status" value="1"/>
</dbReference>
<dbReference type="SMART" id="SM00369">
    <property type="entry name" value="LRR_TYP"/>
    <property type="match status" value="3"/>
</dbReference>
<dbReference type="SUPFAM" id="SSF56219">
    <property type="entry name" value="DNase I-like"/>
    <property type="match status" value="1"/>
</dbReference>
<dbReference type="SUPFAM" id="SSF52058">
    <property type="entry name" value="L domain-like"/>
    <property type="match status" value="1"/>
</dbReference>
<dbReference type="PROSITE" id="PS51450">
    <property type="entry name" value="LRR"/>
    <property type="match status" value="4"/>
</dbReference>
<comment type="function">
    <text evidence="3">Poly(A) nuclease with 3'-5' RNase activity. Catalytic component of the CCR4-NOT complex which is one of the major cellular mRNA deadenylases and is linked to various cellular processes including bulk mRNA degradation, miRNA-mediated repression, translational repression during translational initiation and general transcription regulation. Additional complex functions may be a consequence of its influence on mRNA expression. Involved in mRNA decay mediated by the major-protein-coding determinant of instability (mCRD) of the FOS gene in the cytoplasm. In the presence of ZNF335, enhances ligand-dependent transcriptional activity of nuclear hormone receptors. Mediates cell proliferation and cell survival and prevents cellular senescence.</text>
</comment>
<comment type="catalytic activity">
    <reaction evidence="3">
        <text>Exonucleolytic cleavage of poly(A) to 5'-AMP.</text>
        <dbReference type="EC" id="3.1.13.4"/>
    </reaction>
</comment>
<comment type="cofactor">
    <cofactor evidence="2">
        <name>Mg(2+)</name>
        <dbReference type="ChEBI" id="CHEBI:18420"/>
    </cofactor>
    <text evidence="2">Binds 2 magnesium ions, but the ions interact each with only 1 or 2 residues.</text>
</comment>
<comment type="subunit">
    <text evidence="3 4">Component of the CCR4-NOT complex; distinct complexes seem to exist that differ in the participation of probably mutually exclusive catalytic subunits; the complex contains two deadenylase subunits, CNOT6 or CNOT6L, and CNOT7 or CNOT8. Interacts with CNOT7 and CNOT8 (By similarity). Interacts with UNR (PubMed:15314026). Interacts with ZFP36L1 (via N-terminus). Interacts with ZNF335 (By similarity).</text>
</comment>
<comment type="subcellular location">
    <subcellularLocation>
        <location evidence="2">Cytoplasm</location>
    </subcellularLocation>
    <subcellularLocation>
        <location evidence="2">Nucleus</location>
    </subcellularLocation>
    <text evidence="2">Predominantly cytoplasmic.</text>
</comment>
<comment type="alternative products">
    <event type="alternative splicing"/>
    <isoform>
        <id>Q8K3P5-1</id>
        <name>1</name>
        <sequence type="displayed"/>
    </isoform>
    <isoform>
        <id>Q8K3P5-2</id>
        <name>2</name>
        <sequence type="described" ref="VSP_009939"/>
    </isoform>
    <isoform>
        <id>Q8K3P5-3</id>
        <name>3</name>
        <sequence type="described" ref="VSP_009938"/>
    </isoform>
</comment>
<comment type="developmental stage">
    <text evidence="5">Expressed in embryonic stem (ES) cells.</text>
</comment>
<comment type="similarity">
    <text evidence="8">Belongs to the CCR4/nocturin family.</text>
</comment>
<comment type="sequence caution" evidence="8">
    <conflict type="erroneous initiation">
        <sequence resource="EMBL-CDS" id="BAC98117"/>
    </conflict>
</comment>
<gene>
    <name type="primary">Cnot6</name>
    <name type="synonym">Ccr4</name>
    <name type="synonym">Kiaa1194</name>
</gene>
<keyword id="KW-0010">Activator</keyword>
<keyword id="KW-0025">Alternative splicing</keyword>
<keyword id="KW-0963">Cytoplasm</keyword>
<keyword id="KW-0269">Exonuclease</keyword>
<keyword id="KW-0378">Hydrolase</keyword>
<keyword id="KW-0433">Leucine-rich repeat</keyword>
<keyword id="KW-0460">Magnesium</keyword>
<keyword id="KW-0479">Metal-binding</keyword>
<keyword id="KW-0540">Nuclease</keyword>
<keyword id="KW-0539">Nucleus</keyword>
<keyword id="KW-1185">Reference proteome</keyword>
<keyword id="KW-0677">Repeat</keyword>
<keyword id="KW-0694">RNA-binding</keyword>
<keyword id="KW-0943">RNA-mediated gene silencing</keyword>
<keyword id="KW-0804">Transcription</keyword>
<keyword id="KW-0805">Transcription regulation</keyword>
<keyword id="KW-0810">Translation regulation</keyword>
<sequence length="557" mass="63304">MPKEKYEPPDPRRMYTIMSSEEAANGKKSHWAELEISGKVRSLSSSLWSLTHLTALHLSDNSLSCIPSDIAKLHNLVYLDLSHNQIQSLPAELGNMVSLRELHLNYNQLRVLPFELGKLFQLQTLSLKGNPLTQDILNLCLEPDGTRRLLNYLLDNLSGTAKRISTEQPPPRSWIMLQEPDRTRPTALFSVMCYNVLCDKYATRQLYGYCPSWALNWDYRKKAIIQEILSCNADIISLQEVETEQYYSFFLVELKERGYNGFFSPKSRARTMSEQERKHVDGCAIFFKTEKFTLVQKHTVEFNQLAMANSEGSEAMLNRVMTKDNIGVAVLLELRKELIEMSSGKPHLGTEKQLILVANAHMHWDPEYSDVKLVQTMMFLSEVKNIIDKASRSLKSSVLGECGTIPLVLCADLNSLPDSGVVEYLSTGGVETNHKDFKELRYNESLTNFSCNGKNGMTNGRITHGFKLKSAYENGLMPYTNYTFDFKGIIDYIFYSKPQLNTLAILGPLDHHWLVENNISGCPHPLIPSDHFSLFAQLELLLPFLPQVNGIHLPGRR</sequence>
<protein>
    <recommendedName>
        <fullName>CCR4-NOT transcription complex subunit 6</fullName>
        <ecNumber evidence="3">3.1.13.4</ecNumber>
    </recommendedName>
    <alternativeName>
        <fullName>CCR4 carbon catabolite repression 4-like</fullName>
    </alternativeName>
    <alternativeName>
        <fullName>Carbon catabolite repressor protein 4 homolog</fullName>
    </alternativeName>
    <alternativeName>
        <fullName>Cytoplasmic deadenylase</fullName>
    </alternativeName>
</protein>
<name>CNOT6_MOUSE</name>
<accession>Q8K3P5</accession>
<accession>Q5NCL3</accession>
<accession>Q80V15</accession>